<proteinExistence type="inferred from homology"/>
<organism>
    <name type="scientific">Bos taurus</name>
    <name type="common">Bovine</name>
    <dbReference type="NCBI Taxonomy" id="9913"/>
    <lineage>
        <taxon>Eukaryota</taxon>
        <taxon>Metazoa</taxon>
        <taxon>Chordata</taxon>
        <taxon>Craniata</taxon>
        <taxon>Vertebrata</taxon>
        <taxon>Euteleostomi</taxon>
        <taxon>Mammalia</taxon>
        <taxon>Eutheria</taxon>
        <taxon>Laurasiatheria</taxon>
        <taxon>Artiodactyla</taxon>
        <taxon>Ruminantia</taxon>
        <taxon>Pecora</taxon>
        <taxon>Bovidae</taxon>
        <taxon>Bovinae</taxon>
        <taxon>Bos</taxon>
    </lineage>
</organism>
<evidence type="ECO:0000250" key="1">
    <source>
        <dbReference type="UniProtKB" id="P70445"/>
    </source>
</evidence>
<evidence type="ECO:0000250" key="2">
    <source>
        <dbReference type="UniProtKB" id="Q13541"/>
    </source>
</evidence>
<evidence type="ECO:0000250" key="3">
    <source>
        <dbReference type="UniProtKB" id="Q60876"/>
    </source>
</evidence>
<evidence type="ECO:0000256" key="4">
    <source>
        <dbReference type="SAM" id="MobiDB-lite"/>
    </source>
</evidence>
<evidence type="ECO:0000305" key="5"/>
<reference key="1">
    <citation type="submission" date="2006-08" db="EMBL/GenBank/DDBJ databases">
        <authorList>
            <consortium name="NIH - Mammalian Gene Collection (MGC) project"/>
        </authorList>
    </citation>
    <scope>NUCLEOTIDE SEQUENCE [LARGE SCALE MRNA]</scope>
    <source>
        <strain>Hereford</strain>
        <tissue>Fetal spinal cord</tissue>
    </source>
</reference>
<accession>Q0P5A7</accession>
<comment type="function">
    <text evidence="2">Repressor of translation initiation that regulates EIF4E activity by preventing its assembly into the eIF4F complex: hypophosphorylated form competes with EIF4G1/EIF4G3 and strongly binds to EIF4E, leading to repress translation. In contrast, hyperphosphorylated form dissociates from EIF4E, allowing interaction between EIF4G1/EIF4G3 and EIF4E, leading to initiation of translation. Mediates the regulation of protein translation by hormones, growth factors and other stimuli that signal through the MAP kinase and mTORC1 pathways.</text>
</comment>
<comment type="subunit">
    <text evidence="2">Hypophosphorylated EIF4EBP1 competes with EIF4G1/EIF4G3 to interact with EIF4E; insulin stimulated MAP-kinase (MAPK1 and MAPK3) or mTORC1 phosphorylation of EIF4EBP1 causes dissociation of the complex allowing EIF4G1/EIF4G3 to bind and consequent initiation of translation. Interacts (via TOS motif) with RPTOR; promoting phosphorylation by mTORC1.</text>
</comment>
<comment type="subcellular location">
    <subcellularLocation>
        <location evidence="3">Cytoplasm</location>
    </subcellularLocation>
    <subcellularLocation>
        <location evidence="3">Nucleus</location>
    </subcellularLocation>
    <text evidence="3">Localization to the nucleus is unaffected by phosphorylation status.</text>
</comment>
<comment type="domain">
    <text evidence="2">The TOS motif mediates interaction with RPTOR, leading to promote phosphorylation by mTORC1 complex.</text>
</comment>
<comment type="PTM">
    <text evidence="2">Phosphorylated on serine and threonine residues in response to insulin, EGF and PDGF. Phosphorylation at Thr-37, Thr-46, Ser-65 and Thr-70, corresponding to the hyperphosphorylated form, is regulated by mTORC1 and abolishes binding to EIF4E.</text>
</comment>
<comment type="PTM">
    <text evidence="2">Ubiquitinated: when eIF4E levels are low, hypophosphorylated form is ubiquitinated by the BCR(KLHL25) complex, leading to its degradation and serving as a homeostatic mechanism to maintain translation and prevent eIF4E inhibition when eIF4E levels are low. Not ubiquitinated when hyperphosphorylated (at Thr-37, Thr-46, Ser-65 and Thr-70) or associated with eIF4E.</text>
</comment>
<comment type="similarity">
    <text evidence="5">Belongs to the eIF4E-binding protein family.</text>
</comment>
<keyword id="KW-0007">Acetylation</keyword>
<keyword id="KW-0963">Cytoplasm</keyword>
<keyword id="KW-1017">Isopeptide bond</keyword>
<keyword id="KW-0539">Nucleus</keyword>
<keyword id="KW-0597">Phosphoprotein</keyword>
<keyword id="KW-0652">Protein synthesis inhibitor</keyword>
<keyword id="KW-1185">Reference proteome</keyword>
<keyword id="KW-0810">Translation regulation</keyword>
<keyword id="KW-0832">Ubl conjugation</keyword>
<feature type="initiator methionine" description="Removed" evidence="2">
    <location>
        <position position="1"/>
    </location>
</feature>
<feature type="chain" id="PRO_0000315284" description="Eukaryotic translation initiation factor 4E-binding protein 1">
    <location>
        <begin position="2"/>
        <end position="118"/>
    </location>
</feature>
<feature type="region of interest" description="Disordered" evidence="4">
    <location>
        <begin position="27"/>
        <end position="48"/>
    </location>
</feature>
<feature type="region of interest" description="Disordered" evidence="4">
    <location>
        <begin position="64"/>
        <end position="118"/>
    </location>
</feature>
<feature type="short sequence motif" description="YXXXXLphi motif" evidence="1">
    <location>
        <begin position="54"/>
        <end position="60"/>
    </location>
</feature>
<feature type="short sequence motif" description="TOS motif" evidence="2">
    <location>
        <begin position="114"/>
        <end position="118"/>
    </location>
</feature>
<feature type="compositionally biased region" description="Polar residues" evidence="4">
    <location>
        <begin position="34"/>
        <end position="48"/>
    </location>
</feature>
<feature type="modified residue" description="N-acetylserine" evidence="2">
    <location>
        <position position="2"/>
    </location>
</feature>
<feature type="modified residue" description="Phosphothreonine; by MTOR" evidence="2">
    <location>
        <position position="37"/>
    </location>
</feature>
<feature type="modified residue" description="Phosphothreonine" evidence="2">
    <location>
        <position position="41"/>
    </location>
</feature>
<feature type="modified residue" description="Phosphoserine" evidence="3">
    <location>
        <position position="44"/>
    </location>
</feature>
<feature type="modified residue" description="Phosphothreonine; by MTOR" evidence="2">
    <location>
        <position position="46"/>
    </location>
</feature>
<feature type="modified residue" description="Phosphothreonine" evidence="2">
    <location>
        <position position="50"/>
    </location>
</feature>
<feature type="modified residue" description="Phosphotyrosine" evidence="2">
    <location>
        <position position="54"/>
    </location>
</feature>
<feature type="modified residue" description="Phosphoserine; by DYRK2, MAPK1, MAPK3 and MTOR" evidence="2">
    <location>
        <position position="65"/>
    </location>
</feature>
<feature type="modified residue" description="Phosphothreonine; by MTOR" evidence="2">
    <location>
        <position position="70"/>
    </location>
</feature>
<feature type="modified residue" description="Phosphothreonine" evidence="2">
    <location>
        <position position="77"/>
    </location>
</feature>
<feature type="modified residue" description="Phosphoserine" evidence="2">
    <location>
        <position position="83"/>
    </location>
</feature>
<feature type="modified residue" description="Phosphoserine" evidence="3">
    <location>
        <position position="100"/>
    </location>
</feature>
<feature type="modified residue" description="Phosphoserine; by DYRK2" evidence="2">
    <location>
        <position position="101"/>
    </location>
</feature>
<feature type="modified residue" description="Phosphoserine" evidence="2">
    <location>
        <position position="112"/>
    </location>
</feature>
<feature type="cross-link" description="Glycyl lysine isopeptide (Lys-Gly) (interchain with G-Cter in ubiquitin)" evidence="2">
    <location>
        <position position="57"/>
    </location>
</feature>
<sequence length="118" mass="12588">MSGGSSCSQTPSRAIPTTRRVVLADGVQLPPGDYSTTPGGTLFSTTPGGTRIIYDRKFLMECRNSPVTKTPPRDLPTIPGVTSPTGDEPPTEARQNHLRSSPEDKPAGGEESQFEMDI</sequence>
<gene>
    <name type="primary">EIF4EBP1</name>
</gene>
<dbReference type="EMBL" id="BC120290">
    <property type="protein sequence ID" value="AAI20291.1"/>
    <property type="molecule type" value="mRNA"/>
</dbReference>
<dbReference type="RefSeq" id="NP_001071361.1">
    <property type="nucleotide sequence ID" value="NM_001077893.2"/>
</dbReference>
<dbReference type="SMR" id="Q0P5A7"/>
<dbReference type="FunCoup" id="Q0P5A7">
    <property type="interactions" value="246"/>
</dbReference>
<dbReference type="STRING" id="9913.ENSBTAP00000039615"/>
<dbReference type="PaxDb" id="9913-ENSBTAP00000039615"/>
<dbReference type="PeptideAtlas" id="Q0P5A7"/>
<dbReference type="Ensembl" id="ENSBTAT00000039828.5">
    <property type="protein sequence ID" value="ENSBTAP00000039615.4"/>
    <property type="gene ID" value="ENSBTAG00000027654.6"/>
</dbReference>
<dbReference type="GeneID" id="509613"/>
<dbReference type="KEGG" id="bta:509613"/>
<dbReference type="CTD" id="1978"/>
<dbReference type="VEuPathDB" id="HostDB:ENSBTAG00000027654"/>
<dbReference type="VGNC" id="VGNC:28412">
    <property type="gene designation" value="EIF4EBP1"/>
</dbReference>
<dbReference type="eggNOG" id="ENOG502S4SY">
    <property type="taxonomic scope" value="Eukaryota"/>
</dbReference>
<dbReference type="GeneTree" id="ENSGT00940000159932"/>
<dbReference type="HOGENOM" id="CLU_111706_0_0_1"/>
<dbReference type="InParanoid" id="Q0P5A7"/>
<dbReference type="OMA" id="DEHPQFE"/>
<dbReference type="OrthoDB" id="19729at2759"/>
<dbReference type="TreeFam" id="TF101530"/>
<dbReference type="Reactome" id="R-BTA-166208">
    <property type="pathway name" value="mTORC1-mediated signalling"/>
</dbReference>
<dbReference type="Reactome" id="R-BTA-72662">
    <property type="pathway name" value="Activation of the mRNA upon binding of the cap-binding complex and eIFs, and subsequent binding to 43S"/>
</dbReference>
<dbReference type="Proteomes" id="UP000009136">
    <property type="component" value="Chromosome 27"/>
</dbReference>
<dbReference type="Bgee" id="ENSBTAG00000027654">
    <property type="expression patterns" value="Expressed in granulosa cell and 106 other cell types or tissues"/>
</dbReference>
<dbReference type="GO" id="GO:0005737">
    <property type="term" value="C:cytoplasm"/>
    <property type="evidence" value="ECO:0000318"/>
    <property type="project" value="GO_Central"/>
</dbReference>
<dbReference type="GO" id="GO:0005829">
    <property type="term" value="C:cytosol"/>
    <property type="evidence" value="ECO:0000250"/>
    <property type="project" value="AgBase"/>
</dbReference>
<dbReference type="GO" id="GO:0005634">
    <property type="term" value="C:nucleus"/>
    <property type="evidence" value="ECO:0007669"/>
    <property type="project" value="UniProtKB-SubCell"/>
</dbReference>
<dbReference type="GO" id="GO:0008190">
    <property type="term" value="F:eukaryotic initiation factor 4E binding"/>
    <property type="evidence" value="ECO:0000250"/>
    <property type="project" value="AgBase"/>
</dbReference>
<dbReference type="GO" id="GO:0030371">
    <property type="term" value="F:translation repressor activity"/>
    <property type="evidence" value="ECO:0000250"/>
    <property type="project" value="UniProtKB"/>
</dbReference>
<dbReference type="GO" id="GO:0045947">
    <property type="term" value="P:negative regulation of translational initiation"/>
    <property type="evidence" value="ECO:0000250"/>
    <property type="project" value="UniProtKB"/>
</dbReference>
<dbReference type="GO" id="GO:0031929">
    <property type="term" value="P:TOR signaling"/>
    <property type="evidence" value="ECO:0000250"/>
    <property type="project" value="UniProtKB"/>
</dbReference>
<dbReference type="InterPro" id="IPR008606">
    <property type="entry name" value="EIF4EBP"/>
</dbReference>
<dbReference type="PANTHER" id="PTHR12669">
    <property type="entry name" value="EUKARYOTIC TRANSLATION INITIATION FACTOR 4E-BINDING PROTEIN"/>
    <property type="match status" value="1"/>
</dbReference>
<dbReference type="PANTHER" id="PTHR12669:SF14">
    <property type="entry name" value="EUKARYOTIC TRANSLATION INITIATION FACTOR 4E-BINDING PROTEIN 1"/>
    <property type="match status" value="1"/>
</dbReference>
<dbReference type="Pfam" id="PF05456">
    <property type="entry name" value="eIF_4EBP"/>
    <property type="match status" value="1"/>
</dbReference>
<protein>
    <recommendedName>
        <fullName>Eukaryotic translation initiation factor 4E-binding protein 1</fullName>
        <shortName>4E-BP1</shortName>
        <shortName>eIF4E-binding protein 1</shortName>
    </recommendedName>
</protein>
<name>4EBP1_BOVIN</name>